<gene>
    <name type="primary">pmpR</name>
    <name type="ordered locus">PA0964</name>
</gene>
<feature type="chain" id="PRO_0000175868" description="Transcriptional regulatory protein PmpR">
    <location>
        <begin position="1"/>
        <end position="248"/>
    </location>
</feature>
<feature type="sequence conflict" description="In Ref. 1; BAA11816." evidence="3" ref="1">
    <original>K</original>
    <variation>E</variation>
    <location>
        <position position="14"/>
    </location>
</feature>
<comment type="function">
    <text evidence="2">Involved in regulation of the quinolone signal (PQS) system and of pyocyanine production. Negatively regulates the quorum-sensing response regulator pqsR of the PQS system by binding to its promoter region.</text>
</comment>
<comment type="subcellular location">
    <subcellularLocation>
        <location evidence="1">Cytoplasm</location>
    </subcellularLocation>
</comment>
<comment type="similarity">
    <text evidence="1">Belongs to the TACO1 family.</text>
</comment>
<dbReference type="EMBL" id="D83138">
    <property type="protein sequence ID" value="BAA11816.1"/>
    <property type="molecule type" value="Genomic_DNA"/>
</dbReference>
<dbReference type="EMBL" id="AE004091">
    <property type="protein sequence ID" value="AAG04353.1"/>
    <property type="molecule type" value="Genomic_DNA"/>
</dbReference>
<dbReference type="PIR" id="F83524">
    <property type="entry name" value="F83524"/>
</dbReference>
<dbReference type="PIR" id="JC5479">
    <property type="entry name" value="JC5479"/>
</dbReference>
<dbReference type="RefSeq" id="NP_249655.1">
    <property type="nucleotide sequence ID" value="NC_002516.2"/>
</dbReference>
<dbReference type="RefSeq" id="WP_003086107.1">
    <property type="nucleotide sequence ID" value="NZ_QZGE01000007.1"/>
</dbReference>
<dbReference type="SMR" id="Q51423"/>
<dbReference type="FunCoup" id="Q51423">
    <property type="interactions" value="700"/>
</dbReference>
<dbReference type="STRING" id="208964.PA0964"/>
<dbReference type="PaxDb" id="208964-PA0964"/>
<dbReference type="GeneID" id="882153"/>
<dbReference type="KEGG" id="pae:PA0964"/>
<dbReference type="PATRIC" id="fig|208964.12.peg.1002"/>
<dbReference type="PseudoCAP" id="PA0964"/>
<dbReference type="HOGENOM" id="CLU_062974_2_2_6"/>
<dbReference type="InParanoid" id="Q51423"/>
<dbReference type="OrthoDB" id="9781053at2"/>
<dbReference type="PhylomeDB" id="Q51423"/>
<dbReference type="BioCyc" id="PAER208964:G1FZ6-985-MONOMER"/>
<dbReference type="Proteomes" id="UP000002438">
    <property type="component" value="Chromosome"/>
</dbReference>
<dbReference type="GO" id="GO:0005829">
    <property type="term" value="C:cytosol"/>
    <property type="evidence" value="ECO:0000318"/>
    <property type="project" value="GO_Central"/>
</dbReference>
<dbReference type="GO" id="GO:0003677">
    <property type="term" value="F:DNA binding"/>
    <property type="evidence" value="ECO:0007669"/>
    <property type="project" value="UniProtKB-UniRule"/>
</dbReference>
<dbReference type="GO" id="GO:0071281">
    <property type="term" value="P:cellular response to iron ion"/>
    <property type="evidence" value="ECO:0000269"/>
    <property type="project" value="CollecTF"/>
</dbReference>
<dbReference type="GO" id="GO:0006355">
    <property type="term" value="P:regulation of DNA-templated transcription"/>
    <property type="evidence" value="ECO:0007669"/>
    <property type="project" value="UniProtKB-UniRule"/>
</dbReference>
<dbReference type="FunFam" id="1.10.10.200:FF:000001">
    <property type="entry name" value="Probable transcriptional regulatory protein YebC"/>
    <property type="match status" value="1"/>
</dbReference>
<dbReference type="FunFam" id="3.30.70.980:FF:000002">
    <property type="entry name" value="Probable transcriptional regulatory protein YebC"/>
    <property type="match status" value="1"/>
</dbReference>
<dbReference type="Gene3D" id="1.10.10.200">
    <property type="match status" value="1"/>
</dbReference>
<dbReference type="Gene3D" id="3.30.70.980">
    <property type="match status" value="2"/>
</dbReference>
<dbReference type="HAMAP" id="MF_00693">
    <property type="entry name" value="Transcrip_reg_TACO1"/>
    <property type="match status" value="1"/>
</dbReference>
<dbReference type="InterPro" id="IPR017856">
    <property type="entry name" value="Integrase-like_N"/>
</dbReference>
<dbReference type="InterPro" id="IPR048300">
    <property type="entry name" value="TACO1_YebC-like_2nd/3rd_dom"/>
</dbReference>
<dbReference type="InterPro" id="IPR049083">
    <property type="entry name" value="TACO1_YebC_N"/>
</dbReference>
<dbReference type="InterPro" id="IPR002876">
    <property type="entry name" value="Transcrip_reg_TACO1-like"/>
</dbReference>
<dbReference type="InterPro" id="IPR026564">
    <property type="entry name" value="Transcrip_reg_TACO1-like_dom3"/>
</dbReference>
<dbReference type="InterPro" id="IPR029072">
    <property type="entry name" value="YebC-like"/>
</dbReference>
<dbReference type="NCBIfam" id="NF001030">
    <property type="entry name" value="PRK00110.1"/>
    <property type="match status" value="1"/>
</dbReference>
<dbReference type="NCBIfam" id="NF009044">
    <property type="entry name" value="PRK12378.1"/>
    <property type="match status" value="1"/>
</dbReference>
<dbReference type="NCBIfam" id="TIGR01033">
    <property type="entry name" value="YebC/PmpR family DNA-binding transcriptional regulator"/>
    <property type="match status" value="1"/>
</dbReference>
<dbReference type="PANTHER" id="PTHR12532:SF6">
    <property type="entry name" value="TRANSCRIPTIONAL REGULATORY PROTEIN YEBC-RELATED"/>
    <property type="match status" value="1"/>
</dbReference>
<dbReference type="PANTHER" id="PTHR12532">
    <property type="entry name" value="TRANSLATIONAL ACTIVATOR OF CYTOCHROME C OXIDASE 1"/>
    <property type="match status" value="1"/>
</dbReference>
<dbReference type="Pfam" id="PF20772">
    <property type="entry name" value="TACO1_YebC_N"/>
    <property type="match status" value="1"/>
</dbReference>
<dbReference type="Pfam" id="PF01709">
    <property type="entry name" value="Transcrip_reg"/>
    <property type="match status" value="1"/>
</dbReference>
<dbReference type="SUPFAM" id="SSF75625">
    <property type="entry name" value="YebC-like"/>
    <property type="match status" value="1"/>
</dbReference>
<protein>
    <recommendedName>
        <fullName>Transcriptional regulatory protein PmpR</fullName>
    </recommendedName>
</protein>
<accession>Q51423</accession>
<reference key="1">
    <citation type="journal article" date="1996" name="Gene">
        <title>Molecular analysis of the Pseudomonas aeruginosa genes, ruvA, ruvB and ruvC, involved in processing of homologous recombination intermediates.</title>
        <authorList>
            <person name="Hishida T."/>
            <person name="Iwasaki H."/>
            <person name="Ishioka K."/>
            <person name="Shinagawa H."/>
        </authorList>
    </citation>
    <scope>NUCLEOTIDE SEQUENCE [GENOMIC DNA]</scope>
    <source>
        <strain>ATCC 15692 / DSM 22644 / CIP 104116 / JCM 14847 / LMG 12228 / 1C / PRS 101 / PAO1</strain>
    </source>
</reference>
<reference key="2">
    <citation type="journal article" date="2000" name="Nature">
        <title>Complete genome sequence of Pseudomonas aeruginosa PAO1, an opportunistic pathogen.</title>
        <authorList>
            <person name="Stover C.K."/>
            <person name="Pham X.-Q.T."/>
            <person name="Erwin A.L."/>
            <person name="Mizoguchi S.D."/>
            <person name="Warrener P."/>
            <person name="Hickey M.J."/>
            <person name="Brinkman F.S.L."/>
            <person name="Hufnagle W.O."/>
            <person name="Kowalik D.J."/>
            <person name="Lagrou M."/>
            <person name="Garber R.L."/>
            <person name="Goltry L."/>
            <person name="Tolentino E."/>
            <person name="Westbrock-Wadman S."/>
            <person name="Yuan Y."/>
            <person name="Brody L.L."/>
            <person name="Coulter S.N."/>
            <person name="Folger K.R."/>
            <person name="Kas A."/>
            <person name="Larbig K."/>
            <person name="Lim R.M."/>
            <person name="Smith K.A."/>
            <person name="Spencer D.H."/>
            <person name="Wong G.K.-S."/>
            <person name="Wu Z."/>
            <person name="Paulsen I.T."/>
            <person name="Reizer J."/>
            <person name="Saier M.H. Jr."/>
            <person name="Hancock R.E.W."/>
            <person name="Lory S."/>
            <person name="Olson M.V."/>
        </authorList>
    </citation>
    <scope>NUCLEOTIDE SEQUENCE [LARGE SCALE GENOMIC DNA]</scope>
    <source>
        <strain>ATCC 15692 / DSM 22644 / CIP 104116 / JCM 14847 / LMG 12228 / 1C / PRS 101 / PAO1</strain>
    </source>
</reference>
<reference key="3">
    <citation type="journal article" date="2008" name="J. Bacteriol.">
        <title>The YebC family protein PA0964 negatively regulates the Pseudomonas aeruginosa quinolone signal system and pyocyanin production.</title>
        <authorList>
            <person name="Liang H."/>
            <person name="Li L."/>
            <person name="Dong Z."/>
            <person name="Surette M.G."/>
            <person name="Duan K."/>
        </authorList>
    </citation>
    <scope>FUNCTION</scope>
    <scope>DNA-BINDING</scope>
    <scope>GENE NAME</scope>
    <source>
        <strain>ATCC 15692 / DSM 22644 / CIP 104116 / JCM 14847 / LMG 12228 / 1C / PRS 101 / PAO1</strain>
    </source>
</reference>
<name>PMPR_PSEAE</name>
<keyword id="KW-0963">Cytoplasm</keyword>
<keyword id="KW-0238">DNA-binding</keyword>
<keyword id="KW-1185">Reference proteome</keyword>
<keyword id="KW-0804">Transcription</keyword>
<keyword id="KW-0805">Transcription regulation</keyword>
<proteinExistence type="evidence at protein level"/>
<evidence type="ECO:0000255" key="1">
    <source>
        <dbReference type="HAMAP-Rule" id="MF_00693"/>
    </source>
</evidence>
<evidence type="ECO:0000269" key="2">
    <source>
    </source>
</evidence>
<evidence type="ECO:0000305" key="3"/>
<organism>
    <name type="scientific">Pseudomonas aeruginosa (strain ATCC 15692 / DSM 22644 / CIP 104116 / JCM 14847 / LMG 12228 / 1C / PRS 101 / PAO1)</name>
    <dbReference type="NCBI Taxonomy" id="208964"/>
    <lineage>
        <taxon>Bacteria</taxon>
        <taxon>Pseudomonadati</taxon>
        <taxon>Pseudomonadota</taxon>
        <taxon>Gammaproteobacteria</taxon>
        <taxon>Pseudomonadales</taxon>
        <taxon>Pseudomonadaceae</taxon>
        <taxon>Pseudomonas</taxon>
    </lineage>
</organism>
<sequence length="248" mass="26557">MAGHSKWANIKHRKERQDAKKGKIFTKLIRELTVAARQGGGVPADNPRLRLAVDKALTANMTRDTIDRAIARGVGSNDADNMVELSYEGYAPSGVAIIVEAMTDNRNRTAAEVRHAFSKCGGNLGTDGSVAYMFERKGQISFAPGVDEEALMDAALEAGADDVVVNDDGSIDVFTTFADFISVNEALAAAGFKGDEAEVTMIPSTTATLDLETAQKVLKLIDMLEDLDDVQNVYSNADIPDDVMAQLG</sequence>